<proteinExistence type="inferred from homology"/>
<gene>
    <name evidence="1" type="primary">mraY</name>
    <name type="ordered locus">KPN78578_00900</name>
    <name type="ORF">KPN_00091</name>
</gene>
<accession>A6T4N0</accession>
<organism>
    <name type="scientific">Klebsiella pneumoniae subsp. pneumoniae (strain ATCC 700721 / MGH 78578)</name>
    <dbReference type="NCBI Taxonomy" id="272620"/>
    <lineage>
        <taxon>Bacteria</taxon>
        <taxon>Pseudomonadati</taxon>
        <taxon>Pseudomonadota</taxon>
        <taxon>Gammaproteobacteria</taxon>
        <taxon>Enterobacterales</taxon>
        <taxon>Enterobacteriaceae</taxon>
        <taxon>Klebsiella/Raoultella group</taxon>
        <taxon>Klebsiella</taxon>
        <taxon>Klebsiella pneumoniae complex</taxon>
    </lineage>
</organism>
<evidence type="ECO:0000255" key="1">
    <source>
        <dbReference type="HAMAP-Rule" id="MF_00038"/>
    </source>
</evidence>
<name>MRAY_KLEP7</name>
<dbReference type="EC" id="2.7.8.13" evidence="1"/>
<dbReference type="EMBL" id="CP000647">
    <property type="protein sequence ID" value="ABR75551.1"/>
    <property type="molecule type" value="Genomic_DNA"/>
</dbReference>
<dbReference type="RefSeq" id="WP_002888562.1">
    <property type="nucleotide sequence ID" value="NC_009648.1"/>
</dbReference>
<dbReference type="SMR" id="A6T4N0"/>
<dbReference type="STRING" id="272620.KPN_00091"/>
<dbReference type="PaxDb" id="272620-KPN_00091"/>
<dbReference type="EnsemblBacteria" id="ABR75551">
    <property type="protein sequence ID" value="ABR75551"/>
    <property type="gene ID" value="KPN_00091"/>
</dbReference>
<dbReference type="KEGG" id="kpn:KPN_00091"/>
<dbReference type="HOGENOM" id="CLU_023982_0_0_6"/>
<dbReference type="UniPathway" id="UPA00219"/>
<dbReference type="Proteomes" id="UP000000265">
    <property type="component" value="Chromosome"/>
</dbReference>
<dbReference type="GO" id="GO:0005886">
    <property type="term" value="C:plasma membrane"/>
    <property type="evidence" value="ECO:0007669"/>
    <property type="project" value="UniProtKB-SubCell"/>
</dbReference>
<dbReference type="GO" id="GO:0046872">
    <property type="term" value="F:metal ion binding"/>
    <property type="evidence" value="ECO:0007669"/>
    <property type="project" value="UniProtKB-KW"/>
</dbReference>
<dbReference type="GO" id="GO:0008963">
    <property type="term" value="F:phospho-N-acetylmuramoyl-pentapeptide-transferase activity"/>
    <property type="evidence" value="ECO:0007669"/>
    <property type="project" value="UniProtKB-UniRule"/>
</dbReference>
<dbReference type="GO" id="GO:0051992">
    <property type="term" value="F:UDP-N-acetylmuramoyl-L-alanyl-D-glutamyl-meso-2,6-diaminopimelyl-D-alanyl-D-alanine:undecaprenyl-phosphate transferase activity"/>
    <property type="evidence" value="ECO:0007669"/>
    <property type="project" value="RHEA"/>
</dbReference>
<dbReference type="GO" id="GO:0051301">
    <property type="term" value="P:cell division"/>
    <property type="evidence" value="ECO:0007669"/>
    <property type="project" value="UniProtKB-KW"/>
</dbReference>
<dbReference type="GO" id="GO:0071555">
    <property type="term" value="P:cell wall organization"/>
    <property type="evidence" value="ECO:0007669"/>
    <property type="project" value="UniProtKB-KW"/>
</dbReference>
<dbReference type="GO" id="GO:0009252">
    <property type="term" value="P:peptidoglycan biosynthetic process"/>
    <property type="evidence" value="ECO:0007669"/>
    <property type="project" value="UniProtKB-UniRule"/>
</dbReference>
<dbReference type="GO" id="GO:0008360">
    <property type="term" value="P:regulation of cell shape"/>
    <property type="evidence" value="ECO:0007669"/>
    <property type="project" value="UniProtKB-KW"/>
</dbReference>
<dbReference type="CDD" id="cd06852">
    <property type="entry name" value="GT_MraY"/>
    <property type="match status" value="1"/>
</dbReference>
<dbReference type="HAMAP" id="MF_00038">
    <property type="entry name" value="MraY"/>
    <property type="match status" value="1"/>
</dbReference>
<dbReference type="InterPro" id="IPR000715">
    <property type="entry name" value="Glycosyl_transferase_4"/>
</dbReference>
<dbReference type="InterPro" id="IPR003524">
    <property type="entry name" value="PNAcMuramoyl-5peptid_Trfase"/>
</dbReference>
<dbReference type="InterPro" id="IPR018480">
    <property type="entry name" value="PNAcMuramoyl-5peptid_Trfase_CS"/>
</dbReference>
<dbReference type="NCBIfam" id="TIGR00445">
    <property type="entry name" value="mraY"/>
    <property type="match status" value="1"/>
</dbReference>
<dbReference type="PANTHER" id="PTHR22926">
    <property type="entry name" value="PHOSPHO-N-ACETYLMURAMOYL-PENTAPEPTIDE-TRANSFERASE"/>
    <property type="match status" value="1"/>
</dbReference>
<dbReference type="PANTHER" id="PTHR22926:SF5">
    <property type="entry name" value="PHOSPHO-N-ACETYLMURAMOYL-PENTAPEPTIDE-TRANSFERASE HOMOLOG"/>
    <property type="match status" value="1"/>
</dbReference>
<dbReference type="Pfam" id="PF00953">
    <property type="entry name" value="Glycos_transf_4"/>
    <property type="match status" value="1"/>
</dbReference>
<dbReference type="Pfam" id="PF10555">
    <property type="entry name" value="MraY_sig1"/>
    <property type="match status" value="1"/>
</dbReference>
<dbReference type="PROSITE" id="PS01347">
    <property type="entry name" value="MRAY_1"/>
    <property type="match status" value="1"/>
</dbReference>
<dbReference type="PROSITE" id="PS01348">
    <property type="entry name" value="MRAY_2"/>
    <property type="match status" value="1"/>
</dbReference>
<reference key="1">
    <citation type="submission" date="2006-09" db="EMBL/GenBank/DDBJ databases">
        <authorList>
            <consortium name="The Klebsiella pneumonia Genome Sequencing Project"/>
            <person name="McClelland M."/>
            <person name="Sanderson E.K."/>
            <person name="Spieth J."/>
            <person name="Clifton W.S."/>
            <person name="Latreille P."/>
            <person name="Sabo A."/>
            <person name="Pepin K."/>
            <person name="Bhonagiri V."/>
            <person name="Porwollik S."/>
            <person name="Ali J."/>
            <person name="Wilson R.K."/>
        </authorList>
    </citation>
    <scope>NUCLEOTIDE SEQUENCE [LARGE SCALE GENOMIC DNA]</scope>
    <source>
        <strain>ATCC 700721 / MGH 78578</strain>
    </source>
</reference>
<protein>
    <recommendedName>
        <fullName evidence="1">Phospho-N-acetylmuramoyl-pentapeptide-transferase</fullName>
        <ecNumber evidence="1">2.7.8.13</ecNumber>
    </recommendedName>
    <alternativeName>
        <fullName evidence="1">UDP-MurNAc-pentapeptide phosphotransferase</fullName>
    </alternativeName>
</protein>
<sequence length="360" mass="39938">MLVWLAEHLVKYYSGFNVFSYLTFRAIVSLLTALFISLWMGPRMIARLQKLAFGQVVRNDGPESHFSKRGTPTMGGIMILTAITVSVLLWAYPSNPYVWCVLTVLIGYGIIGFVDDYRKVVRKDTKGLIARWKYFWMSVIALGVAFALYLAGKDTPATELVVPFFKDVMPQLGLFYILLAYFVIVGTGNAVNLTDGLDGLAIMPTVFVAAGFALVAWATGNMNFANYLHIPYLRHAGELVIVCTAIVGAGLGFLWFNTYPAQVFMGDVGSLALGGALGIIAVLLRQEFLLVIMGGVFVVETLSVILQVGSFKLRGQRIFRMAPIHHHYELKGWPEPRVIVRFWIISLMLVLIGLATLKVR</sequence>
<keyword id="KW-0131">Cell cycle</keyword>
<keyword id="KW-0132">Cell division</keyword>
<keyword id="KW-0997">Cell inner membrane</keyword>
<keyword id="KW-1003">Cell membrane</keyword>
<keyword id="KW-0133">Cell shape</keyword>
<keyword id="KW-0961">Cell wall biogenesis/degradation</keyword>
<keyword id="KW-0460">Magnesium</keyword>
<keyword id="KW-0472">Membrane</keyword>
<keyword id="KW-0479">Metal-binding</keyword>
<keyword id="KW-0573">Peptidoglycan synthesis</keyword>
<keyword id="KW-0808">Transferase</keyword>
<keyword id="KW-0812">Transmembrane</keyword>
<keyword id="KW-1133">Transmembrane helix</keyword>
<feature type="chain" id="PRO_1000002994" description="Phospho-N-acetylmuramoyl-pentapeptide-transferase">
    <location>
        <begin position="1"/>
        <end position="360"/>
    </location>
</feature>
<feature type="transmembrane region" description="Helical" evidence="1">
    <location>
        <begin position="26"/>
        <end position="46"/>
    </location>
</feature>
<feature type="transmembrane region" description="Helical" evidence="1">
    <location>
        <begin position="72"/>
        <end position="92"/>
    </location>
</feature>
<feature type="transmembrane region" description="Helical" evidence="1">
    <location>
        <begin position="94"/>
        <end position="114"/>
    </location>
</feature>
<feature type="transmembrane region" description="Helical" evidence="1">
    <location>
        <begin position="132"/>
        <end position="152"/>
    </location>
</feature>
<feature type="transmembrane region" description="Helical" evidence="1">
    <location>
        <begin position="168"/>
        <end position="188"/>
    </location>
</feature>
<feature type="transmembrane region" description="Helical" evidence="1">
    <location>
        <begin position="199"/>
        <end position="219"/>
    </location>
</feature>
<feature type="transmembrane region" description="Helical" evidence="1">
    <location>
        <begin position="236"/>
        <end position="256"/>
    </location>
</feature>
<feature type="transmembrane region" description="Helical" evidence="1">
    <location>
        <begin position="263"/>
        <end position="283"/>
    </location>
</feature>
<feature type="transmembrane region" description="Helical" evidence="1">
    <location>
        <begin position="288"/>
        <end position="308"/>
    </location>
</feature>
<feature type="transmembrane region" description="Helical" evidence="1">
    <location>
        <begin position="338"/>
        <end position="358"/>
    </location>
</feature>
<comment type="function">
    <text evidence="1">Catalyzes the initial step of the lipid cycle reactions in the biosynthesis of the cell wall peptidoglycan: transfers peptidoglycan precursor phospho-MurNAc-pentapeptide from UDP-MurNAc-pentapeptide onto the lipid carrier undecaprenyl phosphate, yielding undecaprenyl-pyrophosphoryl-MurNAc-pentapeptide, known as lipid I.</text>
</comment>
<comment type="catalytic activity">
    <reaction evidence="1">
        <text>UDP-N-acetyl-alpha-D-muramoyl-L-alanyl-gamma-D-glutamyl-meso-2,6-diaminopimeloyl-D-alanyl-D-alanine + di-trans,octa-cis-undecaprenyl phosphate = di-trans,octa-cis-undecaprenyl diphospho-N-acetyl-alpha-D-muramoyl-L-alanyl-D-glutamyl-meso-2,6-diaminopimeloyl-D-alanyl-D-alanine + UMP</text>
        <dbReference type="Rhea" id="RHEA:28386"/>
        <dbReference type="ChEBI" id="CHEBI:57865"/>
        <dbReference type="ChEBI" id="CHEBI:60392"/>
        <dbReference type="ChEBI" id="CHEBI:61386"/>
        <dbReference type="ChEBI" id="CHEBI:61387"/>
        <dbReference type="EC" id="2.7.8.13"/>
    </reaction>
</comment>
<comment type="cofactor">
    <cofactor evidence="1">
        <name>Mg(2+)</name>
        <dbReference type="ChEBI" id="CHEBI:18420"/>
    </cofactor>
</comment>
<comment type="pathway">
    <text evidence="1">Cell wall biogenesis; peptidoglycan biosynthesis.</text>
</comment>
<comment type="subcellular location">
    <subcellularLocation>
        <location evidence="1">Cell inner membrane</location>
        <topology evidence="1">Multi-pass membrane protein</topology>
    </subcellularLocation>
</comment>
<comment type="similarity">
    <text evidence="1">Belongs to the glycosyltransferase 4 family. MraY subfamily.</text>
</comment>